<sequence>MLDLYPVQNLTVDQLEYEKNTRFLQPAWDWIKNGNEHILSSPLFPPFYALSIDYTWVAVFTFIDVFLCNVPFFKDAKIQKDRKVTWDLIKKSLKLQGWNQLLWIYPMALVQLIWVPDTELPILAPTVFEMLSQLAIFFLAFDFTYFWFHYINHKVKWLYRWCHSVHHMYSSPFAASAQHLHPFELFFVGTFITTIPWIFPTHCLTYWIWFFIAQSVSYEVHIGYDFPFALHRIFWFYSGAPAHDMHHLRPLTCFQPWFNYLDRLMGYHITYADLKKMTEAKFKKFGLYSAEDEKGLIKIN</sequence>
<name>C25HL_CAEEL</name>
<keyword id="KW-0325">Glycoprotein</keyword>
<keyword id="KW-0408">Iron</keyword>
<keyword id="KW-0444">Lipid biosynthesis</keyword>
<keyword id="KW-0443">Lipid metabolism</keyword>
<keyword id="KW-0472">Membrane</keyword>
<keyword id="KW-0479">Metal-binding</keyword>
<keyword id="KW-0560">Oxidoreductase</keyword>
<keyword id="KW-1185">Reference proteome</keyword>
<keyword id="KW-0752">Steroid biosynthesis</keyword>
<keyword id="KW-0753">Steroid metabolism</keyword>
<keyword id="KW-0756">Sterol biosynthesis</keyword>
<keyword id="KW-1207">Sterol metabolism</keyword>
<keyword id="KW-0812">Transmembrane</keyword>
<keyword id="KW-1133">Transmembrane helix</keyword>
<feature type="chain" id="PRO_0000226808" description="Cholesterol 25-hydroxylase-like protein">
    <location>
        <begin position="1"/>
        <end position="300"/>
    </location>
</feature>
<feature type="transmembrane region" description="Helical" evidence="2">
    <location>
        <begin position="54"/>
        <end position="73"/>
    </location>
</feature>
<feature type="transmembrane region" description="Helical" evidence="2">
    <location>
        <begin position="95"/>
        <end position="115"/>
    </location>
</feature>
<feature type="transmembrane region" description="Helical" evidence="2">
    <location>
        <begin position="130"/>
        <end position="152"/>
    </location>
</feature>
<feature type="transmembrane region" description="Helical" evidence="2">
    <location>
        <begin position="192"/>
        <end position="212"/>
    </location>
</feature>
<feature type="domain" description="Fatty acid hydroxylase" evidence="2">
    <location>
        <begin position="135"/>
        <end position="266"/>
    </location>
</feature>
<feature type="short sequence motif" description="Histidine box-1">
    <location>
        <begin position="148"/>
        <end position="152"/>
    </location>
</feature>
<feature type="short sequence motif" description="Histidine box-2">
    <location>
        <begin position="163"/>
        <end position="167"/>
    </location>
</feature>
<feature type="short sequence motif" description="Histidine box-3">
    <location>
        <begin position="242"/>
        <end position="248"/>
    </location>
</feature>
<feature type="glycosylation site" description="N-linked (GlcNAc...) asparagine" evidence="3">
    <location>
        <position position="9"/>
    </location>
</feature>
<evidence type="ECO:0000250" key="1"/>
<evidence type="ECO:0000255" key="2"/>
<evidence type="ECO:0000269" key="3">
    <source>
    </source>
</evidence>
<evidence type="ECO:0000305" key="4"/>
<proteinExistence type="evidence at protein level"/>
<dbReference type="EC" id="1.14.99.-"/>
<dbReference type="EMBL" id="FO080312">
    <property type="protein sequence ID" value="CCD62784.1"/>
    <property type="molecule type" value="Genomic_DNA"/>
</dbReference>
<dbReference type="PIR" id="T16255">
    <property type="entry name" value="T16255"/>
</dbReference>
<dbReference type="RefSeq" id="NP_508912.1">
    <property type="nucleotide sequence ID" value="NM_076511.4"/>
</dbReference>
<dbReference type="BioGRID" id="50045">
    <property type="interactions" value="2"/>
</dbReference>
<dbReference type="DIP" id="DIP-27397N"/>
<dbReference type="FunCoup" id="Q20027">
    <property type="interactions" value="111"/>
</dbReference>
<dbReference type="IntAct" id="Q20027">
    <property type="interactions" value="1"/>
</dbReference>
<dbReference type="STRING" id="6239.F35C8.5.1"/>
<dbReference type="iPTMnet" id="Q20027"/>
<dbReference type="PaxDb" id="6239-F35C8.5"/>
<dbReference type="PeptideAtlas" id="Q20027"/>
<dbReference type="EnsemblMetazoa" id="F35C8.5.1">
    <property type="protein sequence ID" value="F35C8.5.1"/>
    <property type="gene ID" value="WBGene00018036"/>
</dbReference>
<dbReference type="GeneID" id="185268"/>
<dbReference type="KEGG" id="cel:CELE_F35C8.5"/>
<dbReference type="UCSC" id="F35C8.5">
    <property type="organism name" value="c. elegans"/>
</dbReference>
<dbReference type="AGR" id="WB:WBGene00018036"/>
<dbReference type="CTD" id="185268"/>
<dbReference type="WormBase" id="F35C8.5">
    <property type="protein sequence ID" value="CE04497"/>
    <property type="gene ID" value="WBGene00018036"/>
</dbReference>
<dbReference type="eggNOG" id="KOG0873">
    <property type="taxonomic scope" value="Eukaryota"/>
</dbReference>
<dbReference type="GeneTree" id="ENSGT00940000162142"/>
<dbReference type="HOGENOM" id="CLU_047036_5_1_1"/>
<dbReference type="InParanoid" id="Q20027"/>
<dbReference type="OMA" id="TTWGFMV"/>
<dbReference type="OrthoDB" id="1658724at2759"/>
<dbReference type="PhylomeDB" id="Q20027"/>
<dbReference type="Reactome" id="R-CEL-192105">
    <property type="pathway name" value="Synthesis of bile acids and bile salts"/>
</dbReference>
<dbReference type="PRO" id="PR:Q20027"/>
<dbReference type="Proteomes" id="UP000001940">
    <property type="component" value="Chromosome X"/>
</dbReference>
<dbReference type="Bgee" id="WBGene00018036">
    <property type="expression patterns" value="Expressed in larva and 2 other cell types or tissues"/>
</dbReference>
<dbReference type="GO" id="GO:0005789">
    <property type="term" value="C:endoplasmic reticulum membrane"/>
    <property type="evidence" value="ECO:0000318"/>
    <property type="project" value="GO_Central"/>
</dbReference>
<dbReference type="GO" id="GO:0000254">
    <property type="term" value="F:C-4 methylsterol oxidase activity"/>
    <property type="evidence" value="ECO:0000318"/>
    <property type="project" value="GO_Central"/>
</dbReference>
<dbReference type="GO" id="GO:0005506">
    <property type="term" value="F:iron ion binding"/>
    <property type="evidence" value="ECO:0007669"/>
    <property type="project" value="InterPro"/>
</dbReference>
<dbReference type="GO" id="GO:0016126">
    <property type="term" value="P:sterol biosynthetic process"/>
    <property type="evidence" value="ECO:0000318"/>
    <property type="project" value="GO_Central"/>
</dbReference>
<dbReference type="InterPro" id="IPR006694">
    <property type="entry name" value="Fatty_acid_hydroxylase"/>
</dbReference>
<dbReference type="InterPro" id="IPR050307">
    <property type="entry name" value="Sterol_Desaturase_Related"/>
</dbReference>
<dbReference type="PANTHER" id="PTHR11863">
    <property type="entry name" value="STEROL DESATURASE"/>
    <property type="match status" value="1"/>
</dbReference>
<dbReference type="Pfam" id="PF04116">
    <property type="entry name" value="FA_hydroxylase"/>
    <property type="match status" value="1"/>
</dbReference>
<reference key="1">
    <citation type="journal article" date="1998" name="Science">
        <title>Genome sequence of the nematode C. elegans: a platform for investigating biology.</title>
        <authorList>
            <consortium name="The C. elegans sequencing consortium"/>
        </authorList>
    </citation>
    <scope>NUCLEOTIDE SEQUENCE [LARGE SCALE GENOMIC DNA]</scope>
    <source>
        <strain>Bristol N2</strain>
    </source>
</reference>
<reference key="2">
    <citation type="journal article" date="2007" name="Mol. Cell. Proteomics">
        <title>Proteomics reveals N-linked glycoprotein diversity in Caenorhabditis elegans and suggests an atypical translocation mechanism for integral membrane proteins.</title>
        <authorList>
            <person name="Kaji H."/>
            <person name="Kamiie J."/>
            <person name="Kawakami H."/>
            <person name="Kido K."/>
            <person name="Yamauchi Y."/>
            <person name="Shinkawa T."/>
            <person name="Taoka M."/>
            <person name="Takahashi N."/>
            <person name="Isobe T."/>
        </authorList>
    </citation>
    <scope>GLYCOSYLATION [LARGE SCALE ANALYSIS] AT ASN-9</scope>
    <scope>IDENTIFICATION BY MASS SPECTROMETRY</scope>
    <source>
        <strain>Bristol N2</strain>
    </source>
</reference>
<gene>
    <name type="ORF">F35C8.5</name>
</gene>
<accession>Q20027</accession>
<comment type="function">
    <text evidence="1">Probable sterol desaturase.</text>
</comment>
<comment type="cofactor">
    <cofactor evidence="1">
        <name>Fe cation</name>
        <dbReference type="ChEBI" id="CHEBI:24875"/>
    </cofactor>
</comment>
<comment type="subcellular location">
    <subcellularLocation>
        <location evidence="4">Membrane</location>
        <topology evidence="4">Multi-pass membrane protein</topology>
    </subcellularLocation>
</comment>
<comment type="similarity">
    <text evidence="4">Belongs to the sterol desaturase family.</text>
</comment>
<protein>
    <recommendedName>
        <fullName>Cholesterol 25-hydroxylase-like protein</fullName>
        <ecNumber>1.14.99.-</ecNumber>
    </recommendedName>
</protein>
<organism>
    <name type="scientific">Caenorhabditis elegans</name>
    <dbReference type="NCBI Taxonomy" id="6239"/>
    <lineage>
        <taxon>Eukaryota</taxon>
        <taxon>Metazoa</taxon>
        <taxon>Ecdysozoa</taxon>
        <taxon>Nematoda</taxon>
        <taxon>Chromadorea</taxon>
        <taxon>Rhabditida</taxon>
        <taxon>Rhabditina</taxon>
        <taxon>Rhabditomorpha</taxon>
        <taxon>Rhabditoidea</taxon>
        <taxon>Rhabditidae</taxon>
        <taxon>Peloderinae</taxon>
        <taxon>Caenorhabditis</taxon>
    </lineage>
</organism>